<keyword id="KW-0030">Aminoacyl-tRNA synthetase</keyword>
<keyword id="KW-0067">ATP-binding</keyword>
<keyword id="KW-0963">Cytoplasm</keyword>
<keyword id="KW-0436">Ligase</keyword>
<keyword id="KW-0479">Metal-binding</keyword>
<keyword id="KW-0547">Nucleotide-binding</keyword>
<keyword id="KW-0648">Protein biosynthesis</keyword>
<keyword id="KW-0694">RNA-binding</keyword>
<keyword id="KW-0820">tRNA-binding</keyword>
<keyword id="KW-0862">Zinc</keyword>
<organism>
    <name type="scientific">Christiangramia forsetii (strain DSM 17595 / CGMCC 1.15422 / KT0803)</name>
    <name type="common">Gramella forsetii</name>
    <dbReference type="NCBI Taxonomy" id="411154"/>
    <lineage>
        <taxon>Bacteria</taxon>
        <taxon>Pseudomonadati</taxon>
        <taxon>Bacteroidota</taxon>
        <taxon>Flavobacteriia</taxon>
        <taxon>Flavobacteriales</taxon>
        <taxon>Flavobacteriaceae</taxon>
        <taxon>Christiangramia</taxon>
    </lineage>
</organism>
<comment type="function">
    <text evidence="1">Catalyzes the attachment of alanine to tRNA(Ala) in a two-step reaction: alanine is first activated by ATP to form Ala-AMP and then transferred to the acceptor end of tRNA(Ala). Also edits incorrectly charged Ser-tRNA(Ala) and Gly-tRNA(Ala) via its editing domain.</text>
</comment>
<comment type="catalytic activity">
    <reaction evidence="1">
        <text>tRNA(Ala) + L-alanine + ATP = L-alanyl-tRNA(Ala) + AMP + diphosphate</text>
        <dbReference type="Rhea" id="RHEA:12540"/>
        <dbReference type="Rhea" id="RHEA-COMP:9657"/>
        <dbReference type="Rhea" id="RHEA-COMP:9923"/>
        <dbReference type="ChEBI" id="CHEBI:30616"/>
        <dbReference type="ChEBI" id="CHEBI:33019"/>
        <dbReference type="ChEBI" id="CHEBI:57972"/>
        <dbReference type="ChEBI" id="CHEBI:78442"/>
        <dbReference type="ChEBI" id="CHEBI:78497"/>
        <dbReference type="ChEBI" id="CHEBI:456215"/>
        <dbReference type="EC" id="6.1.1.7"/>
    </reaction>
</comment>
<comment type="cofactor">
    <cofactor evidence="1">
        <name>Zn(2+)</name>
        <dbReference type="ChEBI" id="CHEBI:29105"/>
    </cofactor>
    <text evidence="1">Binds 1 zinc ion per subunit.</text>
</comment>
<comment type="subcellular location">
    <subcellularLocation>
        <location evidence="1">Cytoplasm</location>
    </subcellularLocation>
</comment>
<comment type="domain">
    <text evidence="1">Consists of three domains; the N-terminal catalytic domain, the editing domain and the C-terminal C-Ala domain. The editing domain removes incorrectly charged amino acids, while the C-Ala domain, along with tRNA(Ala), serves as a bridge to cooperatively bring together the editing and aminoacylation centers thus stimulating deacylation of misacylated tRNAs.</text>
</comment>
<comment type="similarity">
    <text evidence="1">Belongs to the class-II aminoacyl-tRNA synthetase family.</text>
</comment>
<dbReference type="EC" id="6.1.1.7" evidence="1"/>
<dbReference type="EMBL" id="CU207366">
    <property type="protein sequence ID" value="CAL65218.1"/>
    <property type="molecule type" value="Genomic_DNA"/>
</dbReference>
<dbReference type="RefSeq" id="WP_011708156.1">
    <property type="nucleotide sequence ID" value="NC_008571.1"/>
</dbReference>
<dbReference type="SMR" id="A0LXX3"/>
<dbReference type="STRING" id="411154.GFO_0230"/>
<dbReference type="KEGG" id="gfo:GFO_0230"/>
<dbReference type="eggNOG" id="COG0013">
    <property type="taxonomic scope" value="Bacteria"/>
</dbReference>
<dbReference type="HOGENOM" id="CLU_004485_1_1_10"/>
<dbReference type="OrthoDB" id="9803884at2"/>
<dbReference type="Proteomes" id="UP000000755">
    <property type="component" value="Chromosome"/>
</dbReference>
<dbReference type="GO" id="GO:0005737">
    <property type="term" value="C:cytoplasm"/>
    <property type="evidence" value="ECO:0007669"/>
    <property type="project" value="UniProtKB-SubCell"/>
</dbReference>
<dbReference type="GO" id="GO:0004813">
    <property type="term" value="F:alanine-tRNA ligase activity"/>
    <property type="evidence" value="ECO:0007669"/>
    <property type="project" value="UniProtKB-UniRule"/>
</dbReference>
<dbReference type="GO" id="GO:0002161">
    <property type="term" value="F:aminoacyl-tRNA deacylase activity"/>
    <property type="evidence" value="ECO:0007669"/>
    <property type="project" value="TreeGrafter"/>
</dbReference>
<dbReference type="GO" id="GO:0005524">
    <property type="term" value="F:ATP binding"/>
    <property type="evidence" value="ECO:0007669"/>
    <property type="project" value="UniProtKB-UniRule"/>
</dbReference>
<dbReference type="GO" id="GO:0000049">
    <property type="term" value="F:tRNA binding"/>
    <property type="evidence" value="ECO:0007669"/>
    <property type="project" value="UniProtKB-KW"/>
</dbReference>
<dbReference type="GO" id="GO:0008270">
    <property type="term" value="F:zinc ion binding"/>
    <property type="evidence" value="ECO:0007669"/>
    <property type="project" value="UniProtKB-UniRule"/>
</dbReference>
<dbReference type="GO" id="GO:0006419">
    <property type="term" value="P:alanyl-tRNA aminoacylation"/>
    <property type="evidence" value="ECO:0007669"/>
    <property type="project" value="UniProtKB-UniRule"/>
</dbReference>
<dbReference type="CDD" id="cd00673">
    <property type="entry name" value="AlaRS_core"/>
    <property type="match status" value="1"/>
</dbReference>
<dbReference type="FunFam" id="3.10.310.40:FF:000001">
    <property type="entry name" value="Alanine--tRNA ligase"/>
    <property type="match status" value="1"/>
</dbReference>
<dbReference type="FunFam" id="3.30.930.10:FF:000011">
    <property type="entry name" value="Alanine--tRNA ligase, cytoplasmic"/>
    <property type="match status" value="1"/>
</dbReference>
<dbReference type="FunFam" id="3.30.980.10:FF:000004">
    <property type="entry name" value="Alanine--tRNA ligase, cytoplasmic"/>
    <property type="match status" value="1"/>
</dbReference>
<dbReference type="Gene3D" id="2.40.30.130">
    <property type="match status" value="1"/>
</dbReference>
<dbReference type="Gene3D" id="3.10.310.40">
    <property type="match status" value="1"/>
</dbReference>
<dbReference type="Gene3D" id="3.30.54.20">
    <property type="match status" value="1"/>
</dbReference>
<dbReference type="Gene3D" id="3.30.930.10">
    <property type="entry name" value="Bira Bifunctional Protein, Domain 2"/>
    <property type="match status" value="1"/>
</dbReference>
<dbReference type="Gene3D" id="3.30.980.10">
    <property type="entry name" value="Threonyl-trna Synthetase, Chain A, domain 2"/>
    <property type="match status" value="1"/>
</dbReference>
<dbReference type="HAMAP" id="MF_00036_B">
    <property type="entry name" value="Ala_tRNA_synth_B"/>
    <property type="match status" value="1"/>
</dbReference>
<dbReference type="InterPro" id="IPR045864">
    <property type="entry name" value="aa-tRNA-synth_II/BPL/LPL"/>
</dbReference>
<dbReference type="InterPro" id="IPR002318">
    <property type="entry name" value="Ala-tRNA-lgiase_IIc"/>
</dbReference>
<dbReference type="InterPro" id="IPR018162">
    <property type="entry name" value="Ala-tRNA-ligase_IIc_anticod-bd"/>
</dbReference>
<dbReference type="InterPro" id="IPR018165">
    <property type="entry name" value="Ala-tRNA-synth_IIc_core"/>
</dbReference>
<dbReference type="InterPro" id="IPR018164">
    <property type="entry name" value="Ala-tRNA-synth_IIc_N"/>
</dbReference>
<dbReference type="InterPro" id="IPR050058">
    <property type="entry name" value="Ala-tRNA_ligase"/>
</dbReference>
<dbReference type="InterPro" id="IPR023033">
    <property type="entry name" value="Ala_tRNA_ligase_euk/bac"/>
</dbReference>
<dbReference type="InterPro" id="IPR003156">
    <property type="entry name" value="DHHA1_dom"/>
</dbReference>
<dbReference type="InterPro" id="IPR018163">
    <property type="entry name" value="Thr/Ala-tRNA-synth_IIc_edit"/>
</dbReference>
<dbReference type="InterPro" id="IPR009000">
    <property type="entry name" value="Transl_B-barrel_sf"/>
</dbReference>
<dbReference type="InterPro" id="IPR012947">
    <property type="entry name" value="tRNA_SAD"/>
</dbReference>
<dbReference type="NCBIfam" id="TIGR00344">
    <property type="entry name" value="alaS"/>
    <property type="match status" value="1"/>
</dbReference>
<dbReference type="PANTHER" id="PTHR11777:SF9">
    <property type="entry name" value="ALANINE--TRNA LIGASE, CYTOPLASMIC"/>
    <property type="match status" value="1"/>
</dbReference>
<dbReference type="PANTHER" id="PTHR11777">
    <property type="entry name" value="ALANYL-TRNA SYNTHETASE"/>
    <property type="match status" value="1"/>
</dbReference>
<dbReference type="Pfam" id="PF02272">
    <property type="entry name" value="DHHA1"/>
    <property type="match status" value="1"/>
</dbReference>
<dbReference type="Pfam" id="PF01411">
    <property type="entry name" value="tRNA-synt_2c"/>
    <property type="match status" value="1"/>
</dbReference>
<dbReference type="Pfam" id="PF07973">
    <property type="entry name" value="tRNA_SAD"/>
    <property type="match status" value="1"/>
</dbReference>
<dbReference type="PRINTS" id="PR00980">
    <property type="entry name" value="TRNASYNTHALA"/>
</dbReference>
<dbReference type="SMART" id="SM00863">
    <property type="entry name" value="tRNA_SAD"/>
    <property type="match status" value="1"/>
</dbReference>
<dbReference type="SUPFAM" id="SSF55681">
    <property type="entry name" value="Class II aaRS and biotin synthetases"/>
    <property type="match status" value="1"/>
</dbReference>
<dbReference type="SUPFAM" id="SSF101353">
    <property type="entry name" value="Putative anticodon-binding domain of alanyl-tRNA synthetase (AlaRS)"/>
    <property type="match status" value="1"/>
</dbReference>
<dbReference type="SUPFAM" id="SSF55186">
    <property type="entry name" value="ThrRS/AlaRS common domain"/>
    <property type="match status" value="1"/>
</dbReference>
<dbReference type="SUPFAM" id="SSF50447">
    <property type="entry name" value="Translation proteins"/>
    <property type="match status" value="1"/>
</dbReference>
<dbReference type="PROSITE" id="PS50860">
    <property type="entry name" value="AA_TRNA_LIGASE_II_ALA"/>
    <property type="match status" value="1"/>
</dbReference>
<proteinExistence type="inferred from homology"/>
<feature type="chain" id="PRO_0000347623" description="Alanine--tRNA ligase">
    <location>
        <begin position="1"/>
        <end position="871"/>
    </location>
</feature>
<feature type="binding site" evidence="1">
    <location>
        <position position="563"/>
    </location>
    <ligand>
        <name>Zn(2+)</name>
        <dbReference type="ChEBI" id="CHEBI:29105"/>
    </ligand>
</feature>
<feature type="binding site" evidence="1">
    <location>
        <position position="567"/>
    </location>
    <ligand>
        <name>Zn(2+)</name>
        <dbReference type="ChEBI" id="CHEBI:29105"/>
    </ligand>
</feature>
<feature type="binding site" evidence="1">
    <location>
        <position position="665"/>
    </location>
    <ligand>
        <name>Zn(2+)</name>
        <dbReference type="ChEBI" id="CHEBI:29105"/>
    </ligand>
</feature>
<feature type="binding site" evidence="1">
    <location>
        <position position="669"/>
    </location>
    <ligand>
        <name>Zn(2+)</name>
        <dbReference type="ChEBI" id="CHEBI:29105"/>
    </ligand>
</feature>
<gene>
    <name evidence="1" type="primary">alaS</name>
    <name type="ordered locus">GFO_0230</name>
</gene>
<evidence type="ECO:0000255" key="1">
    <source>
        <dbReference type="HAMAP-Rule" id="MF_00036"/>
    </source>
</evidence>
<name>SYA_CHRFK</name>
<accession>A0LXX3</accession>
<sequence length="871" mass="98132">MKSQDIRKQFLEFFKSKSHTIVPSAPMVLKDDPTLMFTNAGMVQFKEFFLGNSVAKSNRVTDTQKCLRVSGKHNDLEEVGHDTYHHTMFEMLGNWSFGDYFKEEAISWAWELLTEVYKISPENLYVSVFEGSDDRDDLGLDTEALELWKKIVPEERIIYGNKKDNFWEMGDQGPCGPCSEIHIDIRSEEEKAKTPGRDLVNMDHPQVVEIWNLVFMQYNRKANGDLEELPAKHIDTGMGFERLCMVLQNTQSNYDTDVFTPLVGEIEEITGVTYGKSEENNIAMRVIADHVRAVAFSIADGQLPSNTGAGYVIRRILRRAIRYGFTFLNTKEPFIYKLVPVLSGQMGATFQELKSQQNLIENVIREEEASFLRTLDQGLILLENLMKESKDKTISGEKAFELYDTFGFPIDLTALILKENGYDLDEKGFEAELKKQKDRSREATAVSAGDWIELNPVDEESFVGYDKLEADAKIARYRKVESKKKGEMFQVVLNKTPFYPEGGGQVGDKGILMSSDGEVVDVVDTKKENNQIIHFTKNLPKNTEAEFKAIVNKTERYNTASNHTATHLLHQALRSILGTHVEQKGSMVQSGYLRFDFSHFSKVTGEELEKVENFVNARIREQLSLDEQRNISYQEAIDQGAIALFGEKYGDSVRAIRFGDSMELCGGIHVKNTSDIWHFKISGESAVASGIRRIEAITGEAAMKYFEEQTNILEEIKSGLKNSNDPVKAINNLQEENINLKRQIESLLKDKAKNLKSKLKHEVKSINGVNFLSKKVDLDAAGIKDLAFQLGEEIDDLFILFGAEQHGKALLSCYISKELVKGKDLNAGQIVRELGKYIQGGGGGQPFFATAGGKNPDGLNEALQKAESFIK</sequence>
<reference key="1">
    <citation type="journal article" date="2006" name="Environ. Microbiol.">
        <title>Whole genome analysis of the marine Bacteroidetes'Gramella forsetii' reveals adaptations to degradation of polymeric organic matter.</title>
        <authorList>
            <person name="Bauer M."/>
            <person name="Kube M."/>
            <person name="Teeling H."/>
            <person name="Richter M."/>
            <person name="Lombardot T."/>
            <person name="Allers E."/>
            <person name="Wuerdemann C.A."/>
            <person name="Quast C."/>
            <person name="Kuhl H."/>
            <person name="Knaust F."/>
            <person name="Woebken D."/>
            <person name="Bischof K."/>
            <person name="Mussmann M."/>
            <person name="Choudhuri J.V."/>
            <person name="Meyer F."/>
            <person name="Reinhardt R."/>
            <person name="Amann R.I."/>
            <person name="Gloeckner F.O."/>
        </authorList>
    </citation>
    <scope>NUCLEOTIDE SEQUENCE [LARGE SCALE GENOMIC DNA]</scope>
    <source>
        <strain>DSM 17595 / CGMCC 1.15422 / KT0803</strain>
    </source>
</reference>
<protein>
    <recommendedName>
        <fullName evidence="1">Alanine--tRNA ligase</fullName>
        <ecNumber evidence="1">6.1.1.7</ecNumber>
    </recommendedName>
    <alternativeName>
        <fullName evidence="1">Alanyl-tRNA synthetase</fullName>
        <shortName evidence="1">AlaRS</shortName>
    </alternativeName>
</protein>